<dbReference type="EC" id="5.2.1.8" evidence="1"/>
<dbReference type="EMBL" id="CP001233">
    <property type="protein sequence ID" value="ACP06153.1"/>
    <property type="molecule type" value="Genomic_DNA"/>
</dbReference>
<dbReference type="RefSeq" id="WP_001198446.1">
    <property type="nucleotide sequence ID" value="NC_012578.1"/>
</dbReference>
<dbReference type="SMR" id="C3LNM7"/>
<dbReference type="KEGG" id="vcm:VCM66_1847"/>
<dbReference type="HOGENOM" id="CLU_033058_2_0_6"/>
<dbReference type="Proteomes" id="UP000001217">
    <property type="component" value="Chromosome I"/>
</dbReference>
<dbReference type="GO" id="GO:0005737">
    <property type="term" value="C:cytoplasm"/>
    <property type="evidence" value="ECO:0007669"/>
    <property type="project" value="UniProtKB-SubCell"/>
</dbReference>
<dbReference type="GO" id="GO:0003755">
    <property type="term" value="F:peptidyl-prolyl cis-trans isomerase activity"/>
    <property type="evidence" value="ECO:0007669"/>
    <property type="project" value="UniProtKB-UniRule"/>
</dbReference>
<dbReference type="GO" id="GO:0044183">
    <property type="term" value="F:protein folding chaperone"/>
    <property type="evidence" value="ECO:0007669"/>
    <property type="project" value="TreeGrafter"/>
</dbReference>
<dbReference type="GO" id="GO:0043022">
    <property type="term" value="F:ribosome binding"/>
    <property type="evidence" value="ECO:0007669"/>
    <property type="project" value="TreeGrafter"/>
</dbReference>
<dbReference type="GO" id="GO:0051083">
    <property type="term" value="P:'de novo' cotranslational protein folding"/>
    <property type="evidence" value="ECO:0007669"/>
    <property type="project" value="TreeGrafter"/>
</dbReference>
<dbReference type="GO" id="GO:0051301">
    <property type="term" value="P:cell division"/>
    <property type="evidence" value="ECO:0007669"/>
    <property type="project" value="UniProtKB-KW"/>
</dbReference>
<dbReference type="GO" id="GO:0061077">
    <property type="term" value="P:chaperone-mediated protein folding"/>
    <property type="evidence" value="ECO:0007669"/>
    <property type="project" value="TreeGrafter"/>
</dbReference>
<dbReference type="GO" id="GO:0015031">
    <property type="term" value="P:protein transport"/>
    <property type="evidence" value="ECO:0007669"/>
    <property type="project" value="UniProtKB-UniRule"/>
</dbReference>
<dbReference type="GO" id="GO:0043335">
    <property type="term" value="P:protein unfolding"/>
    <property type="evidence" value="ECO:0007669"/>
    <property type="project" value="TreeGrafter"/>
</dbReference>
<dbReference type="FunFam" id="3.10.50.40:FF:000001">
    <property type="entry name" value="Trigger factor"/>
    <property type="match status" value="1"/>
</dbReference>
<dbReference type="FunFam" id="3.30.70.1050:FF:000001">
    <property type="entry name" value="Trigger factor"/>
    <property type="match status" value="1"/>
</dbReference>
<dbReference type="Gene3D" id="3.10.50.40">
    <property type="match status" value="1"/>
</dbReference>
<dbReference type="Gene3D" id="3.30.70.1050">
    <property type="entry name" value="Trigger factor ribosome-binding domain"/>
    <property type="match status" value="1"/>
</dbReference>
<dbReference type="Gene3D" id="1.10.3120.10">
    <property type="entry name" value="Trigger factor, C-terminal domain"/>
    <property type="match status" value="1"/>
</dbReference>
<dbReference type="HAMAP" id="MF_00303">
    <property type="entry name" value="Trigger_factor_Tig"/>
    <property type="match status" value="1"/>
</dbReference>
<dbReference type="InterPro" id="IPR046357">
    <property type="entry name" value="PPIase_dom_sf"/>
</dbReference>
<dbReference type="InterPro" id="IPR001179">
    <property type="entry name" value="PPIase_FKBP_dom"/>
</dbReference>
<dbReference type="InterPro" id="IPR005215">
    <property type="entry name" value="Trig_fac"/>
</dbReference>
<dbReference type="InterPro" id="IPR008880">
    <property type="entry name" value="Trigger_fac_C"/>
</dbReference>
<dbReference type="InterPro" id="IPR037041">
    <property type="entry name" value="Trigger_fac_C_sf"/>
</dbReference>
<dbReference type="InterPro" id="IPR008881">
    <property type="entry name" value="Trigger_fac_ribosome-bd_bac"/>
</dbReference>
<dbReference type="InterPro" id="IPR036611">
    <property type="entry name" value="Trigger_fac_ribosome-bd_sf"/>
</dbReference>
<dbReference type="InterPro" id="IPR027304">
    <property type="entry name" value="Trigger_fact/SurA_dom_sf"/>
</dbReference>
<dbReference type="NCBIfam" id="TIGR00115">
    <property type="entry name" value="tig"/>
    <property type="match status" value="1"/>
</dbReference>
<dbReference type="PANTHER" id="PTHR30560">
    <property type="entry name" value="TRIGGER FACTOR CHAPERONE AND PEPTIDYL-PROLYL CIS/TRANS ISOMERASE"/>
    <property type="match status" value="1"/>
</dbReference>
<dbReference type="PANTHER" id="PTHR30560:SF3">
    <property type="entry name" value="TRIGGER FACTOR-LIKE PROTEIN TIG, CHLOROPLASTIC"/>
    <property type="match status" value="1"/>
</dbReference>
<dbReference type="Pfam" id="PF00254">
    <property type="entry name" value="FKBP_C"/>
    <property type="match status" value="1"/>
</dbReference>
<dbReference type="Pfam" id="PF05698">
    <property type="entry name" value="Trigger_C"/>
    <property type="match status" value="1"/>
</dbReference>
<dbReference type="Pfam" id="PF05697">
    <property type="entry name" value="Trigger_N"/>
    <property type="match status" value="1"/>
</dbReference>
<dbReference type="PIRSF" id="PIRSF003095">
    <property type="entry name" value="Trigger_factor"/>
    <property type="match status" value="1"/>
</dbReference>
<dbReference type="SUPFAM" id="SSF54534">
    <property type="entry name" value="FKBP-like"/>
    <property type="match status" value="1"/>
</dbReference>
<dbReference type="SUPFAM" id="SSF109998">
    <property type="entry name" value="Triger factor/SurA peptide-binding domain-like"/>
    <property type="match status" value="1"/>
</dbReference>
<dbReference type="SUPFAM" id="SSF102735">
    <property type="entry name" value="Trigger factor ribosome-binding domain"/>
    <property type="match status" value="1"/>
</dbReference>
<dbReference type="PROSITE" id="PS50059">
    <property type="entry name" value="FKBP_PPIASE"/>
    <property type="match status" value="1"/>
</dbReference>
<organism>
    <name type="scientific">Vibrio cholerae serotype O1 (strain M66-2)</name>
    <dbReference type="NCBI Taxonomy" id="579112"/>
    <lineage>
        <taxon>Bacteria</taxon>
        <taxon>Pseudomonadati</taxon>
        <taxon>Pseudomonadota</taxon>
        <taxon>Gammaproteobacteria</taxon>
        <taxon>Vibrionales</taxon>
        <taxon>Vibrionaceae</taxon>
        <taxon>Vibrio</taxon>
    </lineage>
</organism>
<reference key="1">
    <citation type="journal article" date="2008" name="PLoS ONE">
        <title>A recalibrated molecular clock and independent origins for the cholera pandemic clones.</title>
        <authorList>
            <person name="Feng L."/>
            <person name="Reeves P.R."/>
            <person name="Lan R."/>
            <person name="Ren Y."/>
            <person name="Gao C."/>
            <person name="Zhou Z."/>
            <person name="Ren Y."/>
            <person name="Cheng J."/>
            <person name="Wang W."/>
            <person name="Wang J."/>
            <person name="Qian W."/>
            <person name="Li D."/>
            <person name="Wang L."/>
        </authorList>
    </citation>
    <scope>NUCLEOTIDE SEQUENCE [LARGE SCALE GENOMIC DNA]</scope>
    <source>
        <strain>M66-2</strain>
    </source>
</reference>
<name>TIG_VIBCM</name>
<proteinExistence type="inferred from homology"/>
<protein>
    <recommendedName>
        <fullName evidence="1">Trigger factor</fullName>
        <shortName evidence="1">TF</shortName>
        <ecNumber evidence="1">5.2.1.8</ecNumber>
    </recommendedName>
    <alternativeName>
        <fullName evidence="1">PPIase</fullName>
    </alternativeName>
</protein>
<accession>C3LNM7</accession>
<comment type="function">
    <text evidence="1">Involved in protein export. Acts as a chaperone by maintaining the newly synthesized protein in an open conformation. Functions as a peptidyl-prolyl cis-trans isomerase.</text>
</comment>
<comment type="catalytic activity">
    <reaction evidence="1">
        <text>[protein]-peptidylproline (omega=180) = [protein]-peptidylproline (omega=0)</text>
        <dbReference type="Rhea" id="RHEA:16237"/>
        <dbReference type="Rhea" id="RHEA-COMP:10747"/>
        <dbReference type="Rhea" id="RHEA-COMP:10748"/>
        <dbReference type="ChEBI" id="CHEBI:83833"/>
        <dbReference type="ChEBI" id="CHEBI:83834"/>
        <dbReference type="EC" id="5.2.1.8"/>
    </reaction>
</comment>
<comment type="subcellular location">
    <subcellularLocation>
        <location>Cytoplasm</location>
    </subcellularLocation>
    <text evidence="1">About half TF is bound to the ribosome near the polypeptide exit tunnel while the other half is free in the cytoplasm.</text>
</comment>
<comment type="domain">
    <text evidence="1">Consists of 3 domains; the N-terminus binds the ribosome, the middle domain has PPIase activity, while the C-terminus has intrinsic chaperone activity on its own.</text>
</comment>
<comment type="similarity">
    <text evidence="1">Belongs to the FKBP-type PPIase family. Tig subfamily.</text>
</comment>
<keyword id="KW-0131">Cell cycle</keyword>
<keyword id="KW-0132">Cell division</keyword>
<keyword id="KW-0143">Chaperone</keyword>
<keyword id="KW-0963">Cytoplasm</keyword>
<keyword id="KW-0413">Isomerase</keyword>
<keyword id="KW-0697">Rotamase</keyword>
<evidence type="ECO:0000255" key="1">
    <source>
        <dbReference type="HAMAP-Rule" id="MF_00303"/>
    </source>
</evidence>
<feature type="chain" id="PRO_1000198187" description="Trigger factor">
    <location>
        <begin position="1"/>
        <end position="433"/>
    </location>
</feature>
<feature type="domain" description="PPIase FKBP-type" evidence="1">
    <location>
        <begin position="161"/>
        <end position="246"/>
    </location>
</feature>
<gene>
    <name evidence="1" type="primary">tig</name>
    <name type="ordered locus">VCM66_1847</name>
</gene>
<sequence>MQVTVETLEGLQRRLNITVPAANIEDAVAAELRNIAKNRRFDGFRKGKVPMKMVAKMYGKAVRQDVLGEVMQRHFIEAIVKEKINPAGAPTFAPVEIGEGKDLVFTATFEVYPEVELKGLENIAVEKPAAEVTDADVAEMLETLRKQQATWKEVDEAAENGKRVSIDFVGSIDGVEFEGGKAENFPLEMGAGRMIPGFEDGIVGKTKGMEFVIDVTFPEDYHAENLKGKAAKFAIKVNKVEARELPELNDEFVARFGVAEGGVDALKAEVRKNMERELKQAIKARIKEQAIEGLVKENEIQVPSALIDQEINVLRQQAAQRFGGNVEAAAQLPRELFEEQAKRRVVVGLLLGEVIRTHELKADEEKVKALITEMATAYEDPSEVVSYYEQNQQLMNNMRNVALEEQAVDAIIAKAKVTEKAISFSELMNPVAA</sequence>